<protein>
    <recommendedName>
        <fullName>Phosphoenolpyruvate carboxylase</fullName>
        <shortName>PEPC</shortName>
        <shortName>PEPCase</shortName>
        <ecNumber>4.1.1.31</ecNumber>
    </recommendedName>
</protein>
<gene>
    <name type="primary">ppc</name>
    <name type="ordered locus">STM4119</name>
</gene>
<dbReference type="EC" id="4.1.1.31"/>
<dbReference type="EMBL" id="AE006468">
    <property type="protein sequence ID" value="AAL22958.1"/>
    <property type="molecule type" value="Genomic_DNA"/>
</dbReference>
<dbReference type="RefSeq" id="NP_462999.1">
    <property type="nucleotide sequence ID" value="NC_003197.2"/>
</dbReference>
<dbReference type="RefSeq" id="WP_001005548.1">
    <property type="nucleotide sequence ID" value="NC_003197.2"/>
</dbReference>
<dbReference type="SMR" id="Q8ZKM0"/>
<dbReference type="STRING" id="99287.STM4119"/>
<dbReference type="PaxDb" id="99287-STM4119"/>
<dbReference type="GeneID" id="1255646"/>
<dbReference type="KEGG" id="stm:STM4119"/>
<dbReference type="PATRIC" id="fig|99287.12.peg.4341"/>
<dbReference type="HOGENOM" id="CLU_006557_2_0_6"/>
<dbReference type="OMA" id="VFGWTQS"/>
<dbReference type="PhylomeDB" id="Q8ZKM0"/>
<dbReference type="BioCyc" id="SENT99287:STM4119-MONOMER"/>
<dbReference type="Proteomes" id="UP000001014">
    <property type="component" value="Chromosome"/>
</dbReference>
<dbReference type="GO" id="GO:0005829">
    <property type="term" value="C:cytosol"/>
    <property type="evidence" value="ECO:0000318"/>
    <property type="project" value="GO_Central"/>
</dbReference>
<dbReference type="GO" id="GO:0000287">
    <property type="term" value="F:magnesium ion binding"/>
    <property type="evidence" value="ECO:0007669"/>
    <property type="project" value="UniProtKB-UniRule"/>
</dbReference>
<dbReference type="GO" id="GO:0008964">
    <property type="term" value="F:phosphoenolpyruvate carboxylase activity"/>
    <property type="evidence" value="ECO:0000318"/>
    <property type="project" value="GO_Central"/>
</dbReference>
<dbReference type="GO" id="GO:0015977">
    <property type="term" value="P:carbon fixation"/>
    <property type="evidence" value="ECO:0007669"/>
    <property type="project" value="UniProtKB-UniRule"/>
</dbReference>
<dbReference type="GO" id="GO:0006107">
    <property type="term" value="P:oxaloacetate metabolic process"/>
    <property type="evidence" value="ECO:0007669"/>
    <property type="project" value="UniProtKB-UniRule"/>
</dbReference>
<dbReference type="GO" id="GO:0006099">
    <property type="term" value="P:tricarboxylic acid cycle"/>
    <property type="evidence" value="ECO:0007669"/>
    <property type="project" value="InterPro"/>
</dbReference>
<dbReference type="FunFam" id="1.20.1440.90:FF:000002">
    <property type="entry name" value="Phosphoenolpyruvate carboxylase"/>
    <property type="match status" value="1"/>
</dbReference>
<dbReference type="Gene3D" id="1.20.1440.90">
    <property type="entry name" value="Phosphoenolpyruvate/pyruvate domain"/>
    <property type="match status" value="1"/>
</dbReference>
<dbReference type="HAMAP" id="MF_00595">
    <property type="entry name" value="PEPcase_type1"/>
    <property type="match status" value="1"/>
</dbReference>
<dbReference type="InterPro" id="IPR021135">
    <property type="entry name" value="PEP_COase"/>
</dbReference>
<dbReference type="InterPro" id="IPR022805">
    <property type="entry name" value="PEP_COase_bac/pln-type"/>
</dbReference>
<dbReference type="InterPro" id="IPR018129">
    <property type="entry name" value="PEP_COase_Lys_AS"/>
</dbReference>
<dbReference type="InterPro" id="IPR033129">
    <property type="entry name" value="PEPCASE_His_AS"/>
</dbReference>
<dbReference type="InterPro" id="IPR015813">
    <property type="entry name" value="Pyrv/PenolPyrv_kinase-like_dom"/>
</dbReference>
<dbReference type="NCBIfam" id="NF000584">
    <property type="entry name" value="PRK00009.1"/>
    <property type="match status" value="1"/>
</dbReference>
<dbReference type="PANTHER" id="PTHR30523">
    <property type="entry name" value="PHOSPHOENOLPYRUVATE CARBOXYLASE"/>
    <property type="match status" value="1"/>
</dbReference>
<dbReference type="PANTHER" id="PTHR30523:SF6">
    <property type="entry name" value="PHOSPHOENOLPYRUVATE CARBOXYLASE"/>
    <property type="match status" value="1"/>
</dbReference>
<dbReference type="Pfam" id="PF00311">
    <property type="entry name" value="PEPcase"/>
    <property type="match status" value="1"/>
</dbReference>
<dbReference type="PRINTS" id="PR00150">
    <property type="entry name" value="PEPCARBXLASE"/>
</dbReference>
<dbReference type="SUPFAM" id="SSF51621">
    <property type="entry name" value="Phosphoenolpyruvate/pyruvate domain"/>
    <property type="match status" value="1"/>
</dbReference>
<dbReference type="PROSITE" id="PS00781">
    <property type="entry name" value="PEPCASE_1"/>
    <property type="match status" value="1"/>
</dbReference>
<dbReference type="PROSITE" id="PS00393">
    <property type="entry name" value="PEPCASE_2"/>
    <property type="match status" value="1"/>
</dbReference>
<proteinExistence type="inferred from homology"/>
<comment type="function">
    <text evidence="1">Forms oxaloacetate, a four-carbon dicarboxylic acid source for the tricarboxylic acid cycle.</text>
</comment>
<comment type="catalytic activity">
    <reaction>
        <text>oxaloacetate + phosphate = phosphoenolpyruvate + hydrogencarbonate</text>
        <dbReference type="Rhea" id="RHEA:28370"/>
        <dbReference type="ChEBI" id="CHEBI:16452"/>
        <dbReference type="ChEBI" id="CHEBI:17544"/>
        <dbReference type="ChEBI" id="CHEBI:43474"/>
        <dbReference type="ChEBI" id="CHEBI:58702"/>
        <dbReference type="EC" id="4.1.1.31"/>
    </reaction>
</comment>
<comment type="cofactor">
    <cofactor evidence="1">
        <name>Mg(2+)</name>
        <dbReference type="ChEBI" id="CHEBI:18420"/>
    </cofactor>
</comment>
<comment type="activity regulation">
    <text evidence="1">The enzyme has distinct binding sites for each of the allosteric effectors such as acetyl-CoA, fructose 1,6-bisphosphate, guanosine 3'-diphosphate 5'-diphosphate, long chain fatty acids, and L-aspartate.</text>
</comment>
<comment type="subunit">
    <text evidence="1">Homotetramer.</text>
</comment>
<comment type="similarity">
    <text evidence="2">Belongs to the PEPCase type 1 family.</text>
</comment>
<organism>
    <name type="scientific">Salmonella typhimurium (strain LT2 / SGSC1412 / ATCC 700720)</name>
    <dbReference type="NCBI Taxonomy" id="99287"/>
    <lineage>
        <taxon>Bacteria</taxon>
        <taxon>Pseudomonadati</taxon>
        <taxon>Pseudomonadota</taxon>
        <taxon>Gammaproteobacteria</taxon>
        <taxon>Enterobacterales</taxon>
        <taxon>Enterobacteriaceae</taxon>
        <taxon>Salmonella</taxon>
    </lineage>
</organism>
<feature type="chain" id="PRO_0000166622" description="Phosphoenolpyruvate carboxylase">
    <location>
        <begin position="1"/>
        <end position="883"/>
    </location>
</feature>
<feature type="active site" evidence="1">
    <location>
        <position position="138"/>
    </location>
</feature>
<feature type="active site" evidence="1">
    <location>
        <position position="546"/>
    </location>
</feature>
<reference key="1">
    <citation type="journal article" date="2001" name="Nature">
        <title>Complete genome sequence of Salmonella enterica serovar Typhimurium LT2.</title>
        <authorList>
            <person name="McClelland M."/>
            <person name="Sanderson K.E."/>
            <person name="Spieth J."/>
            <person name="Clifton S.W."/>
            <person name="Latreille P."/>
            <person name="Courtney L."/>
            <person name="Porwollik S."/>
            <person name="Ali J."/>
            <person name="Dante M."/>
            <person name="Du F."/>
            <person name="Hou S."/>
            <person name="Layman D."/>
            <person name="Leonard S."/>
            <person name="Nguyen C."/>
            <person name="Scott K."/>
            <person name="Holmes A."/>
            <person name="Grewal N."/>
            <person name="Mulvaney E."/>
            <person name="Ryan E."/>
            <person name="Sun H."/>
            <person name="Florea L."/>
            <person name="Miller W."/>
            <person name="Stoneking T."/>
            <person name="Nhan M."/>
            <person name="Waterston R."/>
            <person name="Wilson R.K."/>
        </authorList>
    </citation>
    <scope>NUCLEOTIDE SEQUENCE [LARGE SCALE GENOMIC DNA]</scope>
    <source>
        <strain>LT2 / SGSC1412 / ATCC 700720</strain>
    </source>
</reference>
<evidence type="ECO:0000250" key="1"/>
<evidence type="ECO:0000305" key="2"/>
<accession>Q8ZKM0</accession>
<keyword id="KW-0021">Allosteric enzyme</keyword>
<keyword id="KW-0120">Carbon dioxide fixation</keyword>
<keyword id="KW-0456">Lyase</keyword>
<keyword id="KW-0460">Magnesium</keyword>
<keyword id="KW-1185">Reference proteome</keyword>
<name>CAPP_SALTY</name>
<sequence>MNEQYSALRSNVSMLGKVLGETIKDALGEHILDRVETIRKLSKSSRAGNEANRQELLTTLQNLSNDELLPVARAFSQFLNLANTAEQYHSISPKGEAASNPEVIARTLRKLKNQPDLNDATIKKAVESLSLELVLTAHPTEITRRTLIHKMGEINNCLKQLDNTDIADYERHQVMRRLRQLIAQSWHTDEIRKQRPSPVDEAKWGFAVVENSLWQGVPNYLRELNEQLEENLGYKLPVDFVPVRFTSWMGGDRDGNPNVTADITRHVLLLSRWKATDLFLKDIHVLVSELSMVDATPELLALVGEEGASEPYRYLMKKLRARLMATQSWLEARLKGEKLPKPAGLLTQNEQLWEPLYACYQSLQACGMGIIANGELLDTLRRVKCFGVPLVRIDIRQESTRHTEALGEITRYLGIGDYESWSEADKQAFLIRELNSKRPLLPRNWEPSNDTREVLETCKVIAEAPKGSIAAYVISMAKTPSDVLAVHLLLKEAGIGFAMPVAPLFETLDDLNNADDVMTQLLNIDWYRGLIQGKQMVMIGYSDSAKDAGVMAASWAQYQAQDALIKTCEKAGIELTLFHGRGGSIGRGGAPAHAALLSQPPGSLKGGLRVTEQGEMIRFKYGLPEVTVSSLSLYTSAILEANLLPPPEPKDSWRHIMDELSVISCETYRGYVRENKDFVPYFRSATPEQELGKLPLGSRPAKRRPTGGVESLRAIPWIFAWTQNRLMLPAWLGAGTALQKVVEDGKQSELEAMCRDWPFFSTRLGMLEMVFSKADLWLADYYDQRLVAKTLWPLGKELRDLLEEDIKVVLAIANDSHLMADLPWIAESIQLRNVYTDPLNVLQAELLYRSRLTEEQGKSPDPRVEQALMVTIAGVAAGMRNTG</sequence>